<organism>
    <name type="scientific">Homo sapiens</name>
    <name type="common">Human</name>
    <dbReference type="NCBI Taxonomy" id="9606"/>
    <lineage>
        <taxon>Eukaryota</taxon>
        <taxon>Metazoa</taxon>
        <taxon>Chordata</taxon>
        <taxon>Craniata</taxon>
        <taxon>Vertebrata</taxon>
        <taxon>Euteleostomi</taxon>
        <taxon>Mammalia</taxon>
        <taxon>Eutheria</taxon>
        <taxon>Euarchontoglires</taxon>
        <taxon>Primates</taxon>
        <taxon>Haplorrhini</taxon>
        <taxon>Catarrhini</taxon>
        <taxon>Hominidae</taxon>
        <taxon>Homo</taxon>
    </lineage>
</organism>
<protein>
    <recommendedName>
        <fullName>Ornithine decarboxylase</fullName>
        <shortName>ODC</shortName>
        <ecNumber evidence="6">4.1.1.17</ecNumber>
    </recommendedName>
</protein>
<dbReference type="EC" id="4.1.1.17" evidence="6"/>
<dbReference type="EMBL" id="M16650">
    <property type="protein sequence ID" value="AAA59966.2"/>
    <property type="molecule type" value="mRNA"/>
</dbReference>
<dbReference type="EMBL" id="M31061">
    <property type="protein sequence ID" value="AAA60563.1"/>
    <property type="molecule type" value="Genomic_DNA"/>
</dbReference>
<dbReference type="EMBL" id="X16277">
    <property type="protein sequence ID" value="CAA34353.1"/>
    <property type="molecule type" value="Genomic_DNA"/>
</dbReference>
<dbReference type="EMBL" id="M33764">
    <property type="protein sequence ID" value="AAA60564.1"/>
    <property type="molecule type" value="Genomic_DNA"/>
</dbReference>
<dbReference type="EMBL" id="M34158">
    <property type="protein sequence ID" value="AAA59969.1"/>
    <property type="molecule type" value="Genomic_DNA"/>
</dbReference>
<dbReference type="EMBL" id="M81740">
    <property type="protein sequence ID" value="AAA59967.1"/>
    <property type="molecule type" value="Genomic_DNA"/>
</dbReference>
<dbReference type="EMBL" id="X55362">
    <property type="protein sequence ID" value="CAA39047.1"/>
    <property type="molecule type" value="mRNA"/>
</dbReference>
<dbReference type="EMBL" id="AK292352">
    <property type="protein sequence ID" value="BAF85041.1"/>
    <property type="molecule type" value="mRNA"/>
</dbReference>
<dbReference type="EMBL" id="AK312766">
    <property type="protein sequence ID" value="BAG35632.1"/>
    <property type="molecule type" value="mRNA"/>
</dbReference>
<dbReference type="EMBL" id="AY841870">
    <property type="protein sequence ID" value="AAV88093.1"/>
    <property type="molecule type" value="Genomic_DNA"/>
</dbReference>
<dbReference type="EMBL" id="AC007249">
    <property type="protein sequence ID" value="AAY15034.1"/>
    <property type="molecule type" value="Genomic_DNA"/>
</dbReference>
<dbReference type="EMBL" id="CH471053">
    <property type="protein sequence ID" value="EAX00958.1"/>
    <property type="molecule type" value="Genomic_DNA"/>
</dbReference>
<dbReference type="EMBL" id="CH471053">
    <property type="protein sequence ID" value="EAX00959.1"/>
    <property type="molecule type" value="Genomic_DNA"/>
</dbReference>
<dbReference type="EMBL" id="BC025296">
    <property type="protein sequence ID" value="AAH25296.1"/>
    <property type="molecule type" value="mRNA"/>
</dbReference>
<dbReference type="EMBL" id="X53271">
    <property type="protein sequence ID" value="CAA37369.1"/>
    <property type="molecule type" value="mRNA"/>
</dbReference>
<dbReference type="EMBL" id="M20372">
    <property type="protein sequence ID" value="AAA59968.1"/>
    <property type="molecule type" value="mRNA"/>
</dbReference>
<dbReference type="CCDS" id="CCDS1672.1"/>
<dbReference type="PIR" id="S06900">
    <property type="entry name" value="DCHUO"/>
</dbReference>
<dbReference type="RefSeq" id="NP_001274118.1">
    <property type="nucleotide sequence ID" value="NM_001287189.2"/>
</dbReference>
<dbReference type="RefSeq" id="NP_001274119.1">
    <property type="nucleotide sequence ID" value="NM_001287190.2"/>
</dbReference>
<dbReference type="RefSeq" id="NP_002530.1">
    <property type="nucleotide sequence ID" value="NM_002539.3"/>
</dbReference>
<dbReference type="PDB" id="1D7K">
    <property type="method" value="X-ray"/>
    <property type="resolution" value="2.10 A"/>
    <property type="chains" value="A/B=7-427"/>
</dbReference>
<dbReference type="PDB" id="2ON3">
    <property type="method" value="X-ray"/>
    <property type="resolution" value="3.00 A"/>
    <property type="chains" value="A/B=1-461"/>
</dbReference>
<dbReference type="PDB" id="2OO0">
    <property type="method" value="X-ray"/>
    <property type="resolution" value="1.90 A"/>
    <property type="chains" value="A/B=1-461"/>
</dbReference>
<dbReference type="PDB" id="4ZGY">
    <property type="method" value="X-ray"/>
    <property type="resolution" value="2.63 A"/>
    <property type="chains" value="A=2-421"/>
</dbReference>
<dbReference type="PDB" id="5BWA">
    <property type="method" value="X-ray"/>
    <property type="resolution" value="3.20 A"/>
    <property type="chains" value="A=1-461"/>
</dbReference>
<dbReference type="PDB" id="7S3F">
    <property type="method" value="X-ray"/>
    <property type="resolution" value="2.49 A"/>
    <property type="chains" value="A/B=1-424"/>
</dbReference>
<dbReference type="PDB" id="7S3G">
    <property type="method" value="X-ray"/>
    <property type="resolution" value="1.66 A"/>
    <property type="chains" value="A/B=1-424"/>
</dbReference>
<dbReference type="PDB" id="7U6P">
    <property type="method" value="X-ray"/>
    <property type="resolution" value="2.35 A"/>
    <property type="chains" value="A/B=1-424"/>
</dbReference>
<dbReference type="PDB" id="7U6U">
    <property type="method" value="X-ray"/>
    <property type="resolution" value="1.85 A"/>
    <property type="chains" value="A/B=1-424"/>
</dbReference>
<dbReference type="PDB" id="9B8M">
    <property type="method" value="X-ray"/>
    <property type="resolution" value="2.90 A"/>
    <property type="chains" value="A/B=1-422"/>
</dbReference>
<dbReference type="PDB" id="9B8N">
    <property type="method" value="X-ray"/>
    <property type="resolution" value="2.00 A"/>
    <property type="chains" value="A/B=1-424"/>
</dbReference>
<dbReference type="PDBsum" id="1D7K"/>
<dbReference type="PDBsum" id="2ON3"/>
<dbReference type="PDBsum" id="2OO0"/>
<dbReference type="PDBsum" id="4ZGY"/>
<dbReference type="PDBsum" id="5BWA"/>
<dbReference type="PDBsum" id="7S3F"/>
<dbReference type="PDBsum" id="7S3G"/>
<dbReference type="PDBsum" id="7U6P"/>
<dbReference type="PDBsum" id="7U6U"/>
<dbReference type="PDBsum" id="9B8M"/>
<dbReference type="PDBsum" id="9B8N"/>
<dbReference type="SMR" id="P11926"/>
<dbReference type="BioGRID" id="111007">
    <property type="interactions" value="23"/>
</dbReference>
<dbReference type="CORUM" id="P11926"/>
<dbReference type="FunCoup" id="P11926">
    <property type="interactions" value="375"/>
</dbReference>
<dbReference type="IntAct" id="P11926">
    <property type="interactions" value="17"/>
</dbReference>
<dbReference type="MINT" id="P11926"/>
<dbReference type="STRING" id="9606.ENSP00000234111"/>
<dbReference type="BindingDB" id="P11926"/>
<dbReference type="ChEMBL" id="CHEMBL1869"/>
<dbReference type="DrugBank" id="DB06243">
    <property type="generic name" value="Eflornithine"/>
</dbReference>
<dbReference type="DrugBank" id="DB04263">
    <property type="generic name" value="Geneticin"/>
</dbReference>
<dbReference type="DrugBank" id="DB03856">
    <property type="generic name" value="L-Eflornithine"/>
</dbReference>
<dbReference type="DrugBank" id="DB04083">
    <property type="generic name" value="N(6)-(pyridoxal phosphate)-L-lysine"/>
</dbReference>
<dbReference type="DrugBank" id="DB02824">
    <property type="generic name" value="N-Pyridoxyl-Glycine-5-Monophosphate"/>
</dbReference>
<dbReference type="DrugBank" id="DB01917">
    <property type="generic name" value="Putrescine"/>
</dbReference>
<dbReference type="DrugBank" id="DB00114">
    <property type="generic name" value="Pyridoxal phosphate"/>
</dbReference>
<dbReference type="DrugBank" id="DB02209">
    <property type="generic name" value="Pyridoxine phosphate"/>
</dbReference>
<dbReference type="DrugBank" id="DB00203">
    <property type="generic name" value="Sildenafil"/>
</dbReference>
<dbReference type="DrugBank" id="DB00127">
    <property type="generic name" value="Spermine"/>
</dbReference>
<dbReference type="DrugBank" id="DB00313">
    <property type="generic name" value="Valproic acid"/>
</dbReference>
<dbReference type="DrugCentral" id="P11926"/>
<dbReference type="GuidetoPHARMACOLOGY" id="1276"/>
<dbReference type="iPTMnet" id="P11926"/>
<dbReference type="PhosphoSitePlus" id="P11926"/>
<dbReference type="BioMuta" id="ODC1"/>
<dbReference type="DMDM" id="118377"/>
<dbReference type="jPOST" id="P11926"/>
<dbReference type="MassIVE" id="P11926"/>
<dbReference type="PaxDb" id="9606-ENSP00000234111"/>
<dbReference type="PeptideAtlas" id="P11926"/>
<dbReference type="ProteomicsDB" id="52813"/>
<dbReference type="Pumba" id="P11926"/>
<dbReference type="Antibodypedia" id="781">
    <property type="antibodies" value="932 antibodies from 35 providers"/>
</dbReference>
<dbReference type="CPTC" id="P11926">
    <property type="antibodies" value="3 antibodies"/>
</dbReference>
<dbReference type="DNASU" id="4953"/>
<dbReference type="Ensembl" id="ENST00000234111.9">
    <property type="protein sequence ID" value="ENSP00000234111.4"/>
    <property type="gene ID" value="ENSG00000115758.14"/>
</dbReference>
<dbReference type="Ensembl" id="ENST00000405333.5">
    <property type="protein sequence ID" value="ENSP00000385333.1"/>
    <property type="gene ID" value="ENSG00000115758.14"/>
</dbReference>
<dbReference type="Ensembl" id="ENST00000443218.2">
    <property type="protein sequence ID" value="ENSP00000390691.2"/>
    <property type="gene ID" value="ENSG00000115758.14"/>
</dbReference>
<dbReference type="Ensembl" id="ENST00000699835.1">
    <property type="protein sequence ID" value="ENSP00000514633.1"/>
    <property type="gene ID" value="ENSG00000115758.14"/>
</dbReference>
<dbReference type="Ensembl" id="ENST00000699836.1">
    <property type="protein sequence ID" value="ENSP00000514634.1"/>
    <property type="gene ID" value="ENSG00000115758.14"/>
</dbReference>
<dbReference type="GeneID" id="4953"/>
<dbReference type="KEGG" id="hsa:4953"/>
<dbReference type="MANE-Select" id="ENST00000234111.9">
    <property type="protein sequence ID" value="ENSP00000234111.4"/>
    <property type="RefSeq nucleotide sequence ID" value="NM_002539.3"/>
    <property type="RefSeq protein sequence ID" value="NP_002530.1"/>
</dbReference>
<dbReference type="UCSC" id="uc002rao.3">
    <property type="organism name" value="human"/>
</dbReference>
<dbReference type="AGR" id="HGNC:8109"/>
<dbReference type="CTD" id="4953"/>
<dbReference type="DisGeNET" id="4953"/>
<dbReference type="GeneCards" id="ODC1"/>
<dbReference type="GeneReviews" id="ODC1"/>
<dbReference type="HGNC" id="HGNC:8109">
    <property type="gene designation" value="ODC1"/>
</dbReference>
<dbReference type="HPA" id="ENSG00000115758">
    <property type="expression patterns" value="Low tissue specificity"/>
</dbReference>
<dbReference type="MalaCards" id="ODC1"/>
<dbReference type="MIM" id="165640">
    <property type="type" value="gene"/>
</dbReference>
<dbReference type="MIM" id="619075">
    <property type="type" value="phenotype"/>
</dbReference>
<dbReference type="neXtProt" id="NX_P11926"/>
<dbReference type="OpenTargets" id="ENSG00000115758"/>
<dbReference type="Orphanet" id="544488">
    <property type="disease" value="Global developmental delay-alopecia-macrocephaly-facial dysmorphism-structural brain anomalies syndrome"/>
</dbReference>
<dbReference type="PharmGKB" id="PA31897"/>
<dbReference type="VEuPathDB" id="HostDB:ENSG00000115758"/>
<dbReference type="eggNOG" id="KOG0622">
    <property type="taxonomic scope" value="Eukaryota"/>
</dbReference>
<dbReference type="GeneTree" id="ENSGT00950000182995"/>
<dbReference type="HOGENOM" id="CLU_026444_1_1_1"/>
<dbReference type="InParanoid" id="P11926"/>
<dbReference type="OMA" id="AYCRSMA"/>
<dbReference type="OrthoDB" id="5034579at2759"/>
<dbReference type="PAN-GO" id="P11926">
    <property type="GO annotations" value="3 GO annotations based on evolutionary models"/>
</dbReference>
<dbReference type="PhylomeDB" id="P11926"/>
<dbReference type="TreeFam" id="TF300760"/>
<dbReference type="BioCyc" id="MetaCyc:HS03935-MONOMER"/>
<dbReference type="BRENDA" id="4.1.1.17">
    <property type="organism ID" value="2681"/>
</dbReference>
<dbReference type="PathwayCommons" id="P11926"/>
<dbReference type="Reactome" id="R-HSA-350562">
    <property type="pathway name" value="Regulation of ornithine decarboxylase (ODC)"/>
</dbReference>
<dbReference type="Reactome" id="R-HSA-351202">
    <property type="pathway name" value="Metabolism of polyamines"/>
</dbReference>
<dbReference type="SABIO-RK" id="P11926"/>
<dbReference type="SignaLink" id="P11926"/>
<dbReference type="SIGNOR" id="P11926"/>
<dbReference type="UniPathway" id="UPA00535">
    <property type="reaction ID" value="UER00288"/>
</dbReference>
<dbReference type="BioGRID-ORCS" id="4953">
    <property type="hits" value="22 hits in 1174 CRISPR screens"/>
</dbReference>
<dbReference type="ChiTaRS" id="ODC1">
    <property type="organism name" value="human"/>
</dbReference>
<dbReference type="EvolutionaryTrace" id="P11926"/>
<dbReference type="GeneWiki" id="ODC1"/>
<dbReference type="GenomeRNAi" id="4953"/>
<dbReference type="Pharos" id="P11926">
    <property type="development level" value="Tclin"/>
</dbReference>
<dbReference type="PRO" id="PR:P11926"/>
<dbReference type="Proteomes" id="UP000005640">
    <property type="component" value="Chromosome 2"/>
</dbReference>
<dbReference type="RNAct" id="P11926">
    <property type="molecule type" value="protein"/>
</dbReference>
<dbReference type="Bgee" id="ENSG00000115758">
    <property type="expression patterns" value="Expressed in secondary oocyte and 207 other cell types or tissues"/>
</dbReference>
<dbReference type="ExpressionAtlas" id="P11926">
    <property type="expression patterns" value="baseline and differential"/>
</dbReference>
<dbReference type="GO" id="GO:0005737">
    <property type="term" value="C:cytoplasm"/>
    <property type="evidence" value="ECO:0000250"/>
    <property type="project" value="UniProtKB"/>
</dbReference>
<dbReference type="GO" id="GO:0005829">
    <property type="term" value="C:cytosol"/>
    <property type="evidence" value="ECO:0000304"/>
    <property type="project" value="Reactome"/>
</dbReference>
<dbReference type="GO" id="GO:0004586">
    <property type="term" value="F:ornithine decarboxylase activity"/>
    <property type="evidence" value="ECO:0000314"/>
    <property type="project" value="UniProtKB"/>
</dbReference>
<dbReference type="GO" id="GO:0042803">
    <property type="term" value="F:protein homodimerization activity"/>
    <property type="evidence" value="ECO:0000250"/>
    <property type="project" value="UniProtKB"/>
</dbReference>
<dbReference type="GO" id="GO:0008283">
    <property type="term" value="P:cell population proliferation"/>
    <property type="evidence" value="ECO:0007669"/>
    <property type="project" value="Ensembl"/>
</dbReference>
<dbReference type="GO" id="GO:0001822">
    <property type="term" value="P:kidney development"/>
    <property type="evidence" value="ECO:0007669"/>
    <property type="project" value="Ensembl"/>
</dbReference>
<dbReference type="GO" id="GO:0006595">
    <property type="term" value="P:polyamine metabolic process"/>
    <property type="evidence" value="ECO:0000304"/>
    <property type="project" value="Reactome"/>
</dbReference>
<dbReference type="GO" id="GO:0008284">
    <property type="term" value="P:positive regulation of cell population proliferation"/>
    <property type="evidence" value="ECO:0007669"/>
    <property type="project" value="Ensembl"/>
</dbReference>
<dbReference type="GO" id="GO:0033387">
    <property type="term" value="P:putrescine biosynthetic process from arginine, via ornithine"/>
    <property type="evidence" value="ECO:0000250"/>
    <property type="project" value="UniProtKB"/>
</dbReference>
<dbReference type="GO" id="GO:0042176">
    <property type="term" value="P:regulation of protein catabolic process"/>
    <property type="evidence" value="ECO:0000250"/>
    <property type="project" value="UniProtKB"/>
</dbReference>
<dbReference type="GO" id="GO:0009615">
    <property type="term" value="P:response to virus"/>
    <property type="evidence" value="ECO:0000270"/>
    <property type="project" value="UniProtKB"/>
</dbReference>
<dbReference type="CDD" id="cd00622">
    <property type="entry name" value="PLPDE_III_ODC"/>
    <property type="match status" value="1"/>
</dbReference>
<dbReference type="DisProt" id="DP02673"/>
<dbReference type="FunFam" id="2.40.37.10:FF:000005">
    <property type="entry name" value="Ornithine decarboxylase"/>
    <property type="match status" value="1"/>
</dbReference>
<dbReference type="FunFam" id="3.20.20.10:FF:000006">
    <property type="entry name" value="Ornithine decarboxylase 1"/>
    <property type="match status" value="1"/>
</dbReference>
<dbReference type="Gene3D" id="3.20.20.10">
    <property type="entry name" value="Alanine racemase"/>
    <property type="match status" value="1"/>
</dbReference>
<dbReference type="Gene3D" id="2.40.37.10">
    <property type="entry name" value="Lyase, Ornithine Decarboxylase, Chain A, domain 1"/>
    <property type="match status" value="1"/>
</dbReference>
<dbReference type="InterPro" id="IPR009006">
    <property type="entry name" value="Ala_racemase/Decarboxylase_C"/>
</dbReference>
<dbReference type="InterPro" id="IPR022643">
    <property type="entry name" value="De-COase2_C"/>
</dbReference>
<dbReference type="InterPro" id="IPR022657">
    <property type="entry name" value="De-COase2_CS"/>
</dbReference>
<dbReference type="InterPro" id="IPR022644">
    <property type="entry name" value="De-COase2_N"/>
</dbReference>
<dbReference type="InterPro" id="IPR022653">
    <property type="entry name" value="De-COase2_pyr-phos_BS"/>
</dbReference>
<dbReference type="InterPro" id="IPR000183">
    <property type="entry name" value="Orn/DAP/Arg_de-COase"/>
</dbReference>
<dbReference type="InterPro" id="IPR002433">
    <property type="entry name" value="Orn_de-COase"/>
</dbReference>
<dbReference type="InterPro" id="IPR029066">
    <property type="entry name" value="PLP-binding_barrel"/>
</dbReference>
<dbReference type="PANTHER" id="PTHR11482">
    <property type="entry name" value="ARGININE/DIAMINOPIMELATE/ORNITHINE DECARBOXYLASE"/>
    <property type="match status" value="1"/>
</dbReference>
<dbReference type="PANTHER" id="PTHR11482:SF42">
    <property type="entry name" value="ORNITHINE DECARBOXYLASE"/>
    <property type="match status" value="1"/>
</dbReference>
<dbReference type="Pfam" id="PF02784">
    <property type="entry name" value="Orn_Arg_deC_N"/>
    <property type="match status" value="1"/>
</dbReference>
<dbReference type="Pfam" id="PF00278">
    <property type="entry name" value="Orn_DAP_Arg_deC"/>
    <property type="match status" value="1"/>
</dbReference>
<dbReference type="PRINTS" id="PR01179">
    <property type="entry name" value="ODADCRBXLASE"/>
</dbReference>
<dbReference type="PRINTS" id="PR01182">
    <property type="entry name" value="ORNDCRBXLASE"/>
</dbReference>
<dbReference type="SUPFAM" id="SSF50621">
    <property type="entry name" value="Alanine racemase C-terminal domain-like"/>
    <property type="match status" value="1"/>
</dbReference>
<dbReference type="SUPFAM" id="SSF51419">
    <property type="entry name" value="PLP-binding barrel"/>
    <property type="match status" value="1"/>
</dbReference>
<dbReference type="PROSITE" id="PS00878">
    <property type="entry name" value="ODR_DC_2_1"/>
    <property type="match status" value="1"/>
</dbReference>
<dbReference type="PROSITE" id="PS00879">
    <property type="entry name" value="ODR_DC_2_2"/>
    <property type="match status" value="1"/>
</dbReference>
<comment type="function">
    <text evidence="7">Catalyzes the first and rate-limiting step of polyamine biosynthesis that converts ornithine into putrescine, which is the precursor for the polyamines, spermidine and spermine. Polyamines are essential for cell proliferation and are implicated in cellular processes, ranging from DNA replication to apoptosis.</text>
</comment>
<comment type="catalytic activity">
    <reaction evidence="6">
        <text>L-ornithine + H(+) = putrescine + CO2</text>
        <dbReference type="Rhea" id="RHEA:22964"/>
        <dbReference type="ChEBI" id="CHEBI:15378"/>
        <dbReference type="ChEBI" id="CHEBI:16526"/>
        <dbReference type="ChEBI" id="CHEBI:46911"/>
        <dbReference type="ChEBI" id="CHEBI:326268"/>
        <dbReference type="EC" id="4.1.1.17"/>
    </reaction>
</comment>
<comment type="cofactor">
    <cofactor evidence="6 9">
        <name>pyridoxal 5'-phosphate</name>
        <dbReference type="ChEBI" id="CHEBI:597326"/>
    </cofactor>
</comment>
<comment type="activity regulation">
    <text evidence="3 4 6 7">Inhibited by S-nitrosylation (PubMed:10462479, PubMed:11461922). Inhibited by antizymes (AZs) OAZ1, OAZ2 and OAZ3 in response to polyamine levels. AZs inhibit the assembly of the functional homodimer by binding to ODC monomers. Additionally, OAZ1 targets ODC monomers for ubiquitin-independent proteolytic destruction by the 26S proteasome (PubMed:17900240). Inhibited by 1-amino-oxy-3-aminopropane (APA, an isosteric analog of putrescine) (PubMed:17407445). Irreversibly inhibited by alpha-difluoromethylornithine (DFMO) (PubMed:17407445).</text>
</comment>
<comment type="biophysicochemical properties">
    <kinetics>
        <KM evidence="6">0.08 mM for L-ornithine</KM>
        <text evidence="6">kcat is 3.3 sec(-1) with L-ornithine as substrate.</text>
    </kinetics>
</comment>
<comment type="pathway">
    <text>Amine and polyamine biosynthesis; putrescine biosynthesis via L-ornithine pathway; putrescine from L-ornithine: step 1/1.</text>
</comment>
<comment type="subunit">
    <text evidence="1 13">Homodimer. Only the dimer is catalytically active, as the active sites are constructed of residues from both monomers (Probable). Does not form a heterodimer with AZIN2 (By similarity).</text>
</comment>
<comment type="interaction">
    <interactant intactId="EBI-1044287">
        <id>P11926</id>
    </interactant>
    <interactant intactId="EBI-739467">
        <id>Q9H8Y8</id>
        <label>GORASP2</label>
    </interactant>
    <organismsDiffer>false</organismsDiffer>
    <experiments>11</experiments>
</comment>
<comment type="interaction">
    <interactant intactId="EBI-1044287">
        <id>P11926</id>
    </interactant>
    <interactant intactId="EBI-399080">
        <id>Q92993</id>
        <label>KAT5</label>
    </interactant>
    <organismsDiffer>false</organismsDiffer>
    <experiments>6</experiments>
</comment>
<comment type="interaction">
    <interactant intactId="EBI-1044287">
        <id>P11926</id>
    </interactant>
    <interactant intactId="EBI-10281601">
        <id>Q9UMX2</id>
        <label>OAZ3</label>
    </interactant>
    <organismsDiffer>false</organismsDiffer>
    <experiments>7</experiments>
</comment>
<comment type="interaction">
    <interactant intactId="EBI-1044287">
        <id>P11926</id>
    </interactant>
    <interactant intactId="EBI-12049527">
        <id>Q9UMX2-2</id>
        <label>OAZ3</label>
    </interactant>
    <organismsDiffer>false</organismsDiffer>
    <experiments>3</experiments>
</comment>
<comment type="induction">
    <text evidence="5">Down-regulated in response to enterovirus 71 (EV71) infection (at protein level).</text>
</comment>
<comment type="PTM">
    <text evidence="3 4">S-Nitrosylation inhibits the enzyme. S-Nitrosylated in vitro on 4 cysteine residues.</text>
</comment>
<comment type="disease" evidence="10 11">
    <disease id="DI-05945">
        <name>Bachmann-Bupp syndrome</name>
        <acronym>BABS</acronym>
        <description>An autosomal dominant disorder characterized by global developmental delay, alopecia, absolute or relative macrocephaly, and facial dysmorphism. Neuroimaging shows white matter abnormalities, prominent Virchow-Robin spaces, periventricular cysts, and abnormalities of the corpus callosum.</description>
        <dbReference type="MIM" id="619075"/>
    </disease>
    <text evidence="11">The disease is caused by variants affecting the gene represented in this entry. BABS is due to truncating variants that lead to a gain of function. This phenomenon apparently results from truncation proximal to or involving the C-terminal region of ODC1 protein, distal enough to allow escape from nonsense-mediated decay. A gain of function is corroborated by elevated plasma levels of N-acetylputrescine, with otherwise normal polyamine levels, in affected individuals.</text>
</comment>
<comment type="similarity">
    <text evidence="12">Belongs to the Orn/Lys/Arg decarboxylase class-II family.</text>
</comment>
<comment type="online information" name="Wikipedia">
    <link uri="https://en.wikipedia.org/wiki/Ornithine_decarboxylase"/>
    <text>Ornithine decarboxylase entry</text>
</comment>
<accession>P11926</accession>
<accession>Q53TU3</accession>
<accession>Q6LDS9</accession>
<evidence type="ECO:0000250" key="1">
    <source>
        <dbReference type="UniProtKB" id="P00860"/>
    </source>
</evidence>
<evidence type="ECO:0000250" key="2">
    <source>
        <dbReference type="UniProtKB" id="P07805"/>
    </source>
</evidence>
<evidence type="ECO:0000269" key="3">
    <source>
    </source>
</evidence>
<evidence type="ECO:0000269" key="4">
    <source>
    </source>
</evidence>
<evidence type="ECO:0000269" key="5">
    <source>
    </source>
</evidence>
<evidence type="ECO:0000269" key="6">
    <source>
    </source>
</evidence>
<evidence type="ECO:0000269" key="7">
    <source>
    </source>
</evidence>
<evidence type="ECO:0000269" key="8">
    <source>
    </source>
</evidence>
<evidence type="ECO:0000269" key="9">
    <source>
    </source>
</evidence>
<evidence type="ECO:0000269" key="10">
    <source>
    </source>
</evidence>
<evidence type="ECO:0000269" key="11">
    <source>
    </source>
</evidence>
<evidence type="ECO:0000305" key="12"/>
<evidence type="ECO:0000305" key="13">
    <source>
    </source>
</evidence>
<evidence type="ECO:0000305" key="14">
    <source>
    </source>
</evidence>
<evidence type="ECO:0000305" key="15">
    <source>
    </source>
</evidence>
<evidence type="ECO:0007744" key="16">
    <source>
        <dbReference type="PDB" id="1D7K"/>
    </source>
</evidence>
<evidence type="ECO:0007744" key="17">
    <source>
        <dbReference type="PDB" id="2OO0"/>
    </source>
</evidence>
<evidence type="ECO:0007829" key="18">
    <source>
        <dbReference type="PDB" id="2OO0"/>
    </source>
</evidence>
<evidence type="ECO:0007829" key="19">
    <source>
        <dbReference type="PDB" id="7S3G"/>
    </source>
</evidence>
<evidence type="ECO:0007829" key="20">
    <source>
        <dbReference type="PDB" id="7U6U"/>
    </source>
</evidence>
<feature type="chain" id="PRO_0000149891" description="Ornithine decarboxylase">
    <location>
        <begin position="1"/>
        <end position="461"/>
    </location>
</feature>
<feature type="active site" description="Proton donor; shared with dimeric partner" evidence="13">
    <location>
        <position position="360"/>
    </location>
</feature>
<feature type="binding site" evidence="6 17">
    <location>
        <position position="200"/>
    </location>
    <ligand>
        <name>pyridoxal 5'-phosphate</name>
        <dbReference type="ChEBI" id="CHEBI:597326"/>
    </ligand>
</feature>
<feature type="binding site" evidence="6 17">
    <location>
        <position position="237"/>
    </location>
    <ligand>
        <name>pyridoxal 5'-phosphate</name>
        <dbReference type="ChEBI" id="CHEBI:597326"/>
    </ligand>
</feature>
<feature type="binding site" evidence="6 8 9 17">
    <location>
        <begin position="274"/>
        <end position="277"/>
    </location>
    <ligand>
        <name>pyridoxal 5'-phosphate</name>
        <dbReference type="ChEBI" id="CHEBI:597326"/>
    </ligand>
</feature>
<feature type="binding site" description="in other chain" evidence="2">
    <location>
        <begin position="331"/>
        <end position="332"/>
    </location>
    <ligand>
        <name>substrate</name>
        <note>ligand shared between dimeric partners</note>
    </ligand>
</feature>
<feature type="binding site" evidence="2">
    <location>
        <position position="361"/>
    </location>
    <ligand>
        <name>substrate</name>
        <note>ligand shared between dimeric partners</note>
    </ligand>
</feature>
<feature type="binding site" evidence="6 8 9 17">
    <location>
        <position position="389"/>
    </location>
    <ligand>
        <name>pyridoxal 5'-phosphate</name>
        <dbReference type="ChEBI" id="CHEBI:597326"/>
    </ligand>
</feature>
<feature type="site" description="Stacks against the aromatic ring of pyridoxal phosphate and stabilizes reaction intermediates" evidence="1">
    <location>
        <position position="197"/>
    </location>
</feature>
<feature type="modified residue" description="N6-(pyridoxal phosphate)lysine" evidence="8 15">
    <location>
        <position position="69"/>
    </location>
</feature>
<feature type="modified residue" description="Phosphoserine; by CK2" evidence="1">
    <location>
        <position position="303"/>
    </location>
</feature>
<feature type="modified residue" description="S-nitrosocysteine; in inhibited form" evidence="14">
    <location>
        <position position="360"/>
    </location>
</feature>
<feature type="sequence variant" id="VAR_085000" description="In BABS." evidence="11">
    <location>
        <begin position="419"/>
        <end position="461"/>
    </location>
</feature>
<feature type="sequence variant" id="VAR_085001" description="In BABS; gain-of-function variant resulting in increased putrescine biosynthesis as indicated by higher amount of putrescine in patient red blood cells compared to controls; increased ODC1 protein levels in patient red blood cells." evidence="10">
    <location>
        <begin position="448"/>
        <end position="461"/>
    </location>
</feature>
<feature type="mutagenesis site" description="25% decrease of in vitro nitrosylation level." evidence="4">
    <original>C</original>
    <variation>A</variation>
    <location>
        <position position="360"/>
    </location>
</feature>
<feature type="helix" evidence="18">
    <location>
        <begin position="1"/>
        <end position="5"/>
    </location>
</feature>
<feature type="turn" evidence="19">
    <location>
        <begin position="7"/>
        <end position="9"/>
    </location>
</feature>
<feature type="strand" evidence="19">
    <location>
        <begin position="11"/>
        <end position="14"/>
    </location>
</feature>
<feature type="helix" evidence="19">
    <location>
        <begin position="20"/>
        <end position="30"/>
    </location>
</feature>
<feature type="turn" evidence="19">
    <location>
        <begin position="31"/>
        <end position="33"/>
    </location>
</feature>
<feature type="strand" evidence="19">
    <location>
        <begin position="40"/>
        <end position="44"/>
    </location>
</feature>
<feature type="helix" evidence="19">
    <location>
        <begin position="45"/>
        <end position="58"/>
    </location>
</feature>
<feature type="strand" evidence="19">
    <location>
        <begin position="62"/>
        <end position="67"/>
    </location>
</feature>
<feature type="helix" evidence="19">
    <location>
        <begin position="68"/>
        <end position="70"/>
    </location>
</feature>
<feature type="helix" evidence="19">
    <location>
        <begin position="74"/>
        <end position="83"/>
    </location>
</feature>
<feature type="strand" evidence="19">
    <location>
        <begin position="86"/>
        <end position="89"/>
    </location>
</feature>
<feature type="helix" evidence="19">
    <location>
        <begin position="92"/>
        <end position="100"/>
    </location>
</feature>
<feature type="helix" evidence="19">
    <location>
        <begin position="105"/>
        <end position="107"/>
    </location>
</feature>
<feature type="strand" evidence="19">
    <location>
        <begin position="108"/>
        <end position="110"/>
    </location>
</feature>
<feature type="helix" evidence="19">
    <location>
        <begin position="117"/>
        <end position="125"/>
    </location>
</feature>
<feature type="strand" evidence="19">
    <location>
        <begin position="130"/>
        <end position="133"/>
    </location>
</feature>
<feature type="helix" evidence="19">
    <location>
        <begin position="136"/>
        <end position="145"/>
    </location>
</feature>
<feature type="strand" evidence="19">
    <location>
        <begin position="150"/>
        <end position="155"/>
    </location>
</feature>
<feature type="strand" evidence="18">
    <location>
        <begin position="162"/>
        <end position="164"/>
    </location>
</feature>
<feature type="strand" evidence="20">
    <location>
        <begin position="165"/>
        <end position="167"/>
    </location>
</feature>
<feature type="helix" evidence="19">
    <location>
        <begin position="174"/>
        <end position="186"/>
    </location>
</feature>
<feature type="strand" evidence="19">
    <location>
        <begin position="190"/>
        <end position="195"/>
    </location>
</feature>
<feature type="helix" evidence="19">
    <location>
        <begin position="206"/>
        <end position="225"/>
    </location>
</feature>
<feature type="strand" evidence="19">
    <location>
        <begin position="231"/>
        <end position="233"/>
    </location>
</feature>
<feature type="strand" evidence="19">
    <location>
        <begin position="240"/>
        <end position="246"/>
    </location>
</feature>
<feature type="helix" evidence="19">
    <location>
        <begin position="248"/>
        <end position="262"/>
    </location>
</feature>
<feature type="helix" evidence="19">
    <location>
        <begin position="265"/>
        <end position="267"/>
    </location>
</feature>
<feature type="strand" evidence="19">
    <location>
        <begin position="270"/>
        <end position="273"/>
    </location>
</feature>
<feature type="helix" evidence="19">
    <location>
        <begin position="277"/>
        <end position="280"/>
    </location>
</feature>
<feature type="helix" evidence="19">
    <location>
        <begin position="281"/>
        <end position="283"/>
    </location>
</feature>
<feature type="strand" evidence="19">
    <location>
        <begin position="284"/>
        <end position="297"/>
    </location>
</feature>
<feature type="strand" evidence="19">
    <location>
        <begin position="312"/>
        <end position="319"/>
    </location>
</feature>
<feature type="turn" evidence="19">
    <location>
        <begin position="322"/>
        <end position="324"/>
    </location>
</feature>
<feature type="helix" evidence="19">
    <location>
        <begin position="325"/>
        <end position="327"/>
    </location>
</feature>
<feature type="helix" evidence="19">
    <location>
        <begin position="328"/>
        <end position="331"/>
    </location>
</feature>
<feature type="strand" evidence="20">
    <location>
        <begin position="339"/>
        <end position="342"/>
    </location>
</feature>
<feature type="strand" evidence="19">
    <location>
        <begin position="350"/>
        <end position="356"/>
    </location>
</feature>
<feature type="strand" evidence="19">
    <location>
        <begin position="358"/>
        <end position="360"/>
    </location>
</feature>
<feature type="strand" evidence="19">
    <location>
        <begin position="365"/>
        <end position="373"/>
    </location>
</feature>
<feature type="strand" evidence="19">
    <location>
        <begin position="380"/>
        <end position="383"/>
    </location>
</feature>
<feature type="strand" evidence="19">
    <location>
        <begin position="388"/>
        <end position="390"/>
    </location>
</feature>
<feature type="helix" evidence="19">
    <location>
        <begin position="391"/>
        <end position="393"/>
    </location>
</feature>
<feature type="helix" evidence="19">
    <location>
        <begin position="397"/>
        <end position="399"/>
    </location>
</feature>
<feature type="strand" evidence="19">
    <location>
        <begin position="404"/>
        <end position="410"/>
    </location>
</feature>
<feature type="helix" evidence="19">
    <location>
        <begin position="411"/>
        <end position="421"/>
    </location>
</feature>
<name>DCOR_HUMAN</name>
<proteinExistence type="evidence at protein level"/>
<keyword id="KW-0002">3D-structure</keyword>
<keyword id="KW-0210">Decarboxylase</keyword>
<keyword id="KW-0225">Disease variant</keyword>
<keyword id="KW-1063">Hypotrichosis</keyword>
<keyword id="KW-0456">Lyase</keyword>
<keyword id="KW-0597">Phosphoprotein</keyword>
<keyword id="KW-0620">Polyamine biosynthesis</keyword>
<keyword id="KW-1267">Proteomics identification</keyword>
<keyword id="KW-0663">Pyridoxal phosphate</keyword>
<keyword id="KW-1185">Reference proteome</keyword>
<keyword id="KW-0702">S-nitrosylation</keyword>
<reference key="1">
    <citation type="journal article" date="1987" name="DNA">
        <title>Complete amino acid sequence of human ornithine decarboxylase deduced from complementary DNA.</title>
        <authorList>
            <person name="Hickok N.J."/>
            <person name="Seppaenen P.J."/>
            <person name="Gunsalus G.L."/>
            <person name="Jaenne O.A."/>
        </authorList>
    </citation>
    <scope>NUCLEOTIDE SEQUENCE [MRNA]</scope>
</reference>
<reference key="2">
    <citation type="submission" date="2003-04" db="EMBL/GenBank/DDBJ databases">
        <authorList>
            <person name="Jaenne O.A."/>
        </authorList>
    </citation>
    <scope>SEQUENCE REVISION TO 415</scope>
</reference>
<reference key="3">
    <citation type="journal article" date="1989" name="DNA">
        <title>Characterization and sequence analysis of the human ornithine decarboxylase gene.</title>
        <authorList>
            <person name="Fitzgerald M.C."/>
            <person name="Flanagan M.A."/>
        </authorList>
    </citation>
    <scope>NUCLEOTIDE SEQUENCE [GENOMIC DNA]</scope>
</reference>
<reference key="4">
    <citation type="journal article" date="1989" name="Nucleic Acids Res.">
        <title>Nucleotide sequence of the human ornithine decarboxylase gene.</title>
        <authorList>
            <person name="van Steeg H."/>
            <person name="van Oostrom C.T.M."/>
            <person name="Martens J.W.M."/>
            <person name="van Kreyl C.F."/>
            <person name="Schepens J."/>
            <person name="Wieringa B."/>
        </authorList>
    </citation>
    <scope>NUCLEOTIDE SEQUENCE [GENOMIC DNA]</scope>
</reference>
<reference key="5">
    <citation type="journal article" date="1990" name="Gene">
        <title>Human ornithine decarboxylase-encoding loci: nucleotide sequence of the expressed gene and characterization of a pseudogene.</title>
        <authorList>
            <person name="Hickok N.J."/>
            <person name="Wahlfors J."/>
            <person name="Crozat A."/>
            <person name="Halmekytoe M."/>
            <person name="Alhonen L."/>
            <person name="Jaenne J."/>
            <person name="Jaenne O.A."/>
        </authorList>
    </citation>
    <scope>NUCLEOTIDE SEQUENCE [GENOMIC DNA]</scope>
</reference>
<reference key="6">
    <citation type="journal article" date="1990" name="J. Biol. Chem.">
        <title>Isolation and expression of a human ornithine decarboxylase gene.</title>
        <authorList>
            <person name="Moshier J.A."/>
            <person name="Gilbert J.D."/>
            <person name="Skunca M."/>
            <person name="Dosescu J."/>
            <person name="Almodovar K.M."/>
            <person name="Luk G.D."/>
        </authorList>
    </citation>
    <scope>NUCLEOTIDE SEQUENCE [GENOMIC DNA]</scope>
</reference>
<reference key="7">
    <citation type="journal article" date="1992" name="Nucleic Acids Res.">
        <title>Multiple promoter elements govern expression of the human ornithine decarboxylase gene in colon carcinoma cells.</title>
        <authorList>
            <person name="Moshier J.A."/>
            <person name="Osborne D.L."/>
            <person name="Skunca M."/>
            <person name="Dosescu J."/>
            <person name="Gilbert J.D."/>
            <person name="Fitzgerald M.C."/>
            <person name="Polidori G."/>
            <person name="Wagner R.L."/>
            <person name="Friezner Degen S.J."/>
            <person name="Luk G.D."/>
            <person name="Flanagan M.A."/>
        </authorList>
    </citation>
    <scope>NUCLEOTIDE SEQUENCE [GENOMIC DNA]</scope>
</reference>
<reference key="8">
    <citation type="journal article" date="1995" name="Cell Growth Differ.">
        <title>Regulation of ornithine decarboxylase mRNA levels in human breast cancer cells: pattern of expression and involvement of core enhancer promoter element.</title>
        <authorList>
            <person name="Wright P.S."/>
            <person name="Cooper J.R."/>
            <person name="Cross-Doersen D.E."/>
            <person name="Miller J.A."/>
            <person name="Chmielewski P.A."/>
            <person name="Wagner R.L."/>
            <person name="Streng K.A."/>
            <person name="Flanagan M.A."/>
        </authorList>
    </citation>
    <scope>NUCLEOTIDE SEQUENCE [MRNA]</scope>
</reference>
<reference key="9">
    <citation type="journal article" date="2004" name="Nat. Genet.">
        <title>Complete sequencing and characterization of 21,243 full-length human cDNAs.</title>
        <authorList>
            <person name="Ota T."/>
            <person name="Suzuki Y."/>
            <person name="Nishikawa T."/>
            <person name="Otsuki T."/>
            <person name="Sugiyama T."/>
            <person name="Irie R."/>
            <person name="Wakamatsu A."/>
            <person name="Hayashi K."/>
            <person name="Sato H."/>
            <person name="Nagai K."/>
            <person name="Kimura K."/>
            <person name="Makita H."/>
            <person name="Sekine M."/>
            <person name="Obayashi M."/>
            <person name="Nishi T."/>
            <person name="Shibahara T."/>
            <person name="Tanaka T."/>
            <person name="Ishii S."/>
            <person name="Yamamoto J."/>
            <person name="Saito K."/>
            <person name="Kawai Y."/>
            <person name="Isono Y."/>
            <person name="Nakamura Y."/>
            <person name="Nagahari K."/>
            <person name="Murakami K."/>
            <person name="Yasuda T."/>
            <person name="Iwayanagi T."/>
            <person name="Wagatsuma M."/>
            <person name="Shiratori A."/>
            <person name="Sudo H."/>
            <person name="Hosoiri T."/>
            <person name="Kaku Y."/>
            <person name="Kodaira H."/>
            <person name="Kondo H."/>
            <person name="Sugawara M."/>
            <person name="Takahashi M."/>
            <person name="Kanda K."/>
            <person name="Yokoi T."/>
            <person name="Furuya T."/>
            <person name="Kikkawa E."/>
            <person name="Omura Y."/>
            <person name="Abe K."/>
            <person name="Kamihara K."/>
            <person name="Katsuta N."/>
            <person name="Sato K."/>
            <person name="Tanikawa M."/>
            <person name="Yamazaki M."/>
            <person name="Ninomiya K."/>
            <person name="Ishibashi T."/>
            <person name="Yamashita H."/>
            <person name="Murakawa K."/>
            <person name="Fujimori K."/>
            <person name="Tanai H."/>
            <person name="Kimata M."/>
            <person name="Watanabe M."/>
            <person name="Hiraoka S."/>
            <person name="Chiba Y."/>
            <person name="Ishida S."/>
            <person name="Ono Y."/>
            <person name="Takiguchi S."/>
            <person name="Watanabe S."/>
            <person name="Yosida M."/>
            <person name="Hotuta T."/>
            <person name="Kusano J."/>
            <person name="Kanehori K."/>
            <person name="Takahashi-Fujii A."/>
            <person name="Hara H."/>
            <person name="Tanase T.-O."/>
            <person name="Nomura Y."/>
            <person name="Togiya S."/>
            <person name="Komai F."/>
            <person name="Hara R."/>
            <person name="Takeuchi K."/>
            <person name="Arita M."/>
            <person name="Imose N."/>
            <person name="Musashino K."/>
            <person name="Yuuki H."/>
            <person name="Oshima A."/>
            <person name="Sasaki N."/>
            <person name="Aotsuka S."/>
            <person name="Yoshikawa Y."/>
            <person name="Matsunawa H."/>
            <person name="Ichihara T."/>
            <person name="Shiohata N."/>
            <person name="Sano S."/>
            <person name="Moriya S."/>
            <person name="Momiyama H."/>
            <person name="Satoh N."/>
            <person name="Takami S."/>
            <person name="Terashima Y."/>
            <person name="Suzuki O."/>
            <person name="Nakagawa S."/>
            <person name="Senoh A."/>
            <person name="Mizoguchi H."/>
            <person name="Goto Y."/>
            <person name="Shimizu F."/>
            <person name="Wakebe H."/>
            <person name="Hishigaki H."/>
            <person name="Watanabe T."/>
            <person name="Sugiyama A."/>
            <person name="Takemoto M."/>
            <person name="Kawakami B."/>
            <person name="Yamazaki M."/>
            <person name="Watanabe K."/>
            <person name="Kumagai A."/>
            <person name="Itakura S."/>
            <person name="Fukuzumi Y."/>
            <person name="Fujimori Y."/>
            <person name="Komiyama M."/>
            <person name="Tashiro H."/>
            <person name="Tanigami A."/>
            <person name="Fujiwara T."/>
            <person name="Ono T."/>
            <person name="Yamada K."/>
            <person name="Fujii Y."/>
            <person name="Ozaki K."/>
            <person name="Hirao M."/>
            <person name="Ohmori Y."/>
            <person name="Kawabata A."/>
            <person name="Hikiji T."/>
            <person name="Kobatake N."/>
            <person name="Inagaki H."/>
            <person name="Ikema Y."/>
            <person name="Okamoto S."/>
            <person name="Okitani R."/>
            <person name="Kawakami T."/>
            <person name="Noguchi S."/>
            <person name="Itoh T."/>
            <person name="Shigeta K."/>
            <person name="Senba T."/>
            <person name="Matsumura K."/>
            <person name="Nakajima Y."/>
            <person name="Mizuno T."/>
            <person name="Morinaga M."/>
            <person name="Sasaki M."/>
            <person name="Togashi T."/>
            <person name="Oyama M."/>
            <person name="Hata H."/>
            <person name="Watanabe M."/>
            <person name="Komatsu T."/>
            <person name="Mizushima-Sugano J."/>
            <person name="Satoh T."/>
            <person name="Shirai Y."/>
            <person name="Takahashi Y."/>
            <person name="Nakagawa K."/>
            <person name="Okumura K."/>
            <person name="Nagase T."/>
            <person name="Nomura N."/>
            <person name="Kikuchi H."/>
            <person name="Masuho Y."/>
            <person name="Yamashita R."/>
            <person name="Nakai K."/>
            <person name="Yada T."/>
            <person name="Nakamura Y."/>
            <person name="Ohara O."/>
            <person name="Isogai T."/>
            <person name="Sugano S."/>
        </authorList>
    </citation>
    <scope>NUCLEOTIDE SEQUENCE [LARGE SCALE MRNA]</scope>
    <source>
        <tissue>Esophagus</tissue>
        <tissue>Testis</tissue>
    </source>
</reference>
<reference key="10">
    <citation type="submission" date="2004-11" db="EMBL/GenBank/DDBJ databases">
        <authorList>
            <consortium name="NIEHS SNPs program"/>
        </authorList>
    </citation>
    <scope>NUCLEOTIDE SEQUENCE [GENOMIC DNA]</scope>
</reference>
<reference key="11">
    <citation type="journal article" date="2005" name="Nature">
        <title>Generation and annotation of the DNA sequences of human chromosomes 2 and 4.</title>
        <authorList>
            <person name="Hillier L.W."/>
            <person name="Graves T.A."/>
            <person name="Fulton R.S."/>
            <person name="Fulton L.A."/>
            <person name="Pepin K.H."/>
            <person name="Minx P."/>
            <person name="Wagner-McPherson C."/>
            <person name="Layman D."/>
            <person name="Wylie K."/>
            <person name="Sekhon M."/>
            <person name="Becker M.C."/>
            <person name="Fewell G.A."/>
            <person name="Delehaunty K.D."/>
            <person name="Miner T.L."/>
            <person name="Nash W.E."/>
            <person name="Kremitzki C."/>
            <person name="Oddy L."/>
            <person name="Du H."/>
            <person name="Sun H."/>
            <person name="Bradshaw-Cordum H."/>
            <person name="Ali J."/>
            <person name="Carter J."/>
            <person name="Cordes M."/>
            <person name="Harris A."/>
            <person name="Isak A."/>
            <person name="van Brunt A."/>
            <person name="Nguyen C."/>
            <person name="Du F."/>
            <person name="Courtney L."/>
            <person name="Kalicki J."/>
            <person name="Ozersky P."/>
            <person name="Abbott S."/>
            <person name="Armstrong J."/>
            <person name="Belter E.A."/>
            <person name="Caruso L."/>
            <person name="Cedroni M."/>
            <person name="Cotton M."/>
            <person name="Davidson T."/>
            <person name="Desai A."/>
            <person name="Elliott G."/>
            <person name="Erb T."/>
            <person name="Fronick C."/>
            <person name="Gaige T."/>
            <person name="Haakenson W."/>
            <person name="Haglund K."/>
            <person name="Holmes A."/>
            <person name="Harkins R."/>
            <person name="Kim K."/>
            <person name="Kruchowski S.S."/>
            <person name="Strong C.M."/>
            <person name="Grewal N."/>
            <person name="Goyea E."/>
            <person name="Hou S."/>
            <person name="Levy A."/>
            <person name="Martinka S."/>
            <person name="Mead K."/>
            <person name="McLellan M.D."/>
            <person name="Meyer R."/>
            <person name="Randall-Maher J."/>
            <person name="Tomlinson C."/>
            <person name="Dauphin-Kohlberg S."/>
            <person name="Kozlowicz-Reilly A."/>
            <person name="Shah N."/>
            <person name="Swearengen-Shahid S."/>
            <person name="Snider J."/>
            <person name="Strong J.T."/>
            <person name="Thompson J."/>
            <person name="Yoakum M."/>
            <person name="Leonard S."/>
            <person name="Pearman C."/>
            <person name="Trani L."/>
            <person name="Radionenko M."/>
            <person name="Waligorski J.E."/>
            <person name="Wang C."/>
            <person name="Rock S.M."/>
            <person name="Tin-Wollam A.-M."/>
            <person name="Maupin R."/>
            <person name="Latreille P."/>
            <person name="Wendl M.C."/>
            <person name="Yang S.-P."/>
            <person name="Pohl C."/>
            <person name="Wallis J.W."/>
            <person name="Spieth J."/>
            <person name="Bieri T.A."/>
            <person name="Berkowicz N."/>
            <person name="Nelson J.O."/>
            <person name="Osborne J."/>
            <person name="Ding L."/>
            <person name="Meyer R."/>
            <person name="Sabo A."/>
            <person name="Shotland Y."/>
            <person name="Sinha P."/>
            <person name="Wohldmann P.E."/>
            <person name="Cook L.L."/>
            <person name="Hickenbotham M.T."/>
            <person name="Eldred J."/>
            <person name="Williams D."/>
            <person name="Jones T.A."/>
            <person name="She X."/>
            <person name="Ciccarelli F.D."/>
            <person name="Izaurralde E."/>
            <person name="Taylor J."/>
            <person name="Schmutz J."/>
            <person name="Myers R.M."/>
            <person name="Cox D.R."/>
            <person name="Huang X."/>
            <person name="McPherson J.D."/>
            <person name="Mardis E.R."/>
            <person name="Clifton S.W."/>
            <person name="Warren W.C."/>
            <person name="Chinwalla A.T."/>
            <person name="Eddy S.R."/>
            <person name="Marra M.A."/>
            <person name="Ovcharenko I."/>
            <person name="Furey T.S."/>
            <person name="Miller W."/>
            <person name="Eichler E.E."/>
            <person name="Bork P."/>
            <person name="Suyama M."/>
            <person name="Torrents D."/>
            <person name="Waterston R.H."/>
            <person name="Wilson R.K."/>
        </authorList>
    </citation>
    <scope>NUCLEOTIDE SEQUENCE [LARGE SCALE GENOMIC DNA]</scope>
</reference>
<reference key="12">
    <citation type="submission" date="2005-09" db="EMBL/GenBank/DDBJ databases">
        <authorList>
            <person name="Mural R.J."/>
            <person name="Istrail S."/>
            <person name="Sutton G."/>
            <person name="Florea L."/>
            <person name="Halpern A.L."/>
            <person name="Mobarry C.M."/>
            <person name="Lippert R."/>
            <person name="Walenz B."/>
            <person name="Shatkay H."/>
            <person name="Dew I."/>
            <person name="Miller J.R."/>
            <person name="Flanigan M.J."/>
            <person name="Edwards N.J."/>
            <person name="Bolanos R."/>
            <person name="Fasulo D."/>
            <person name="Halldorsson B.V."/>
            <person name="Hannenhalli S."/>
            <person name="Turner R."/>
            <person name="Yooseph S."/>
            <person name="Lu F."/>
            <person name="Nusskern D.R."/>
            <person name="Shue B.C."/>
            <person name="Zheng X.H."/>
            <person name="Zhong F."/>
            <person name="Delcher A.L."/>
            <person name="Huson D.H."/>
            <person name="Kravitz S.A."/>
            <person name="Mouchard L."/>
            <person name="Reinert K."/>
            <person name="Remington K.A."/>
            <person name="Clark A.G."/>
            <person name="Waterman M.S."/>
            <person name="Eichler E.E."/>
            <person name="Adams M.D."/>
            <person name="Hunkapiller M.W."/>
            <person name="Myers E.W."/>
            <person name="Venter J.C."/>
        </authorList>
    </citation>
    <scope>NUCLEOTIDE SEQUENCE [LARGE SCALE GENOMIC DNA]</scope>
</reference>
<reference key="13">
    <citation type="journal article" date="2004" name="Genome Res.">
        <title>The status, quality, and expansion of the NIH full-length cDNA project: the Mammalian Gene Collection (MGC).</title>
        <authorList>
            <consortium name="The MGC Project Team"/>
        </authorList>
    </citation>
    <scope>NUCLEOTIDE SEQUENCE [LARGE SCALE MRNA]</scope>
    <source>
        <tissue>Lymph</tissue>
    </source>
</reference>
<reference key="14">
    <citation type="journal article" date="1990" name="Cancer Res.">
        <title>Expression of human chromosome 2 ornithine decarboxylase gene in ornithine decarboxylase-deficient Chinese hamster ovary cells.</title>
        <authorList>
            <person name="Hsieh J.T."/>
            <person name="Denning M.F."/>
            <person name="Heidel S.M."/>
            <person name="Verma A.K."/>
        </authorList>
    </citation>
    <scope>NUCLEOTIDE SEQUENCE [MRNA] OF 1-22</scope>
</reference>
<reference key="15">
    <citation type="journal article" date="1987" name="J. Cell. Physiol.">
        <title>Cell-cycle-dependent expression of human ornithine decarboxylase.</title>
        <authorList>
            <person name="Kaczmarek L."/>
            <person name="Calabretta B."/>
            <person name="Ferrari S."/>
            <person name="de Riel J.K."/>
        </authorList>
    </citation>
    <scope>NUCLEOTIDE SEQUENCE [MRNA] OF 112-461</scope>
</reference>
<reference key="16">
    <citation type="journal article" date="1999" name="Biochem. Biophys. Res. Commun.">
        <title>Nitric oxide inhibits ornithine decarboxylase by S-nitrosylation.</title>
        <authorList>
            <person name="Bauer P.M."/>
            <person name="Fukuto J.M."/>
            <person name="Buga G.M."/>
            <person name="Pegg A.E."/>
            <person name="Ignarro L.J."/>
        </authorList>
    </citation>
    <scope>S-NITROSYLATION</scope>
</reference>
<reference key="17">
    <citation type="journal article" date="2001" name="J. Biol. Chem.">
        <title>Nitric oxide inhibits ornithine decarboxylase via S-nitrosylation of cysteine 360 in the active site of the enzyme.</title>
        <authorList>
            <person name="Bauer P.M."/>
            <person name="Buga G.M."/>
            <person name="Fukuto J.M."/>
            <person name="Pegg A.E."/>
            <person name="Ignarro L.J."/>
        </authorList>
    </citation>
    <scope>S-NITROSYLATION AT CYS-360</scope>
    <scope>MUTAGENESIS OF CYS-360</scope>
</reference>
<reference key="18">
    <citation type="journal article" date="2006" name="Cell. Microbiol.">
        <title>Transcriptomic and proteomic analyses of rhabdomyosarcoma cells reveal differential cellular gene expression in response to enterovirus 71 infection.</title>
        <authorList>
            <person name="Leong W.F."/>
            <person name="Chow V.T."/>
        </authorList>
    </citation>
    <scope>INDUCTION</scope>
    <scope>IDENTIFICATION BY MASS SPECTROMETRY</scope>
</reference>
<reference key="19">
    <citation type="journal article" date="2008" name="Biochem. J.">
        <title>Human ornithine decarboxylase paralogue (ODCp) is an antizyme inhibitor but not an arginine decarboxylase.</title>
        <authorList>
            <person name="Kanerva K."/>
            <person name="Makitie L.T."/>
            <person name="Pelander A."/>
            <person name="Heiskala M."/>
            <person name="Andersson L.C."/>
        </authorList>
    </citation>
    <scope>FUNCTION</scope>
    <scope>ACTIVITY REGULATION</scope>
</reference>
<reference evidence="16" key="20">
    <citation type="journal article" date="2000" name="J. Mol. Biol.">
        <title>Crystal structure of human ornithine decarboxylase at 2.1 A resolution: structural insights to antizyme binding.</title>
        <authorList>
            <person name="Almrud J.J."/>
            <person name="Oliveira M.A."/>
            <person name="Kern A.D."/>
            <person name="Grishin N.V."/>
            <person name="Phillips M.A."/>
            <person name="Hackert M.L."/>
        </authorList>
    </citation>
    <scope>X-RAY CRYSTALLOGRAPHY (2.10 ANGSTROMS) OF 7-427</scope>
    <scope>SUBUNIT</scope>
</reference>
<reference key="21">
    <citation type="journal article" date="2007" name="Biochem. J.">
        <title>A structural insight into the inhibition of human and Leishmania donovani ornithine decarboxylases by 1-amino-oxy-3-aminopropane.</title>
        <authorList>
            <person name="Dufe V.T."/>
            <person name="Ingner D."/>
            <person name="Heby O."/>
            <person name="Khomutov A.R."/>
            <person name="Persson L."/>
            <person name="Al-Karadaghi S."/>
        </authorList>
    </citation>
    <scope>X-RAY CRYSTALLOGRAPHY (1.90 ANGSTROMS) IN COMPLEX WITH COFACTOR AND SUBSTRATE ANALOGS</scope>
    <scope>CATALYTIC ACTIVITY</scope>
    <scope>BIOPHYSICOCHEMICAL PROPERTIES</scope>
</reference>
<reference key="22">
    <citation type="journal article" date="2015" name="Proc. Natl. Acad. Sci. U.S.A.">
        <title>Structural basis of antizyme-mediated regulation of polyamine homeostasis.</title>
        <authorList>
            <person name="Wu H.Y."/>
            <person name="Chen S.F."/>
            <person name="Hsieh J.Y."/>
            <person name="Chou F."/>
            <person name="Wang Y.H."/>
            <person name="Lin W.T."/>
            <person name="Lee P.Y."/>
            <person name="Yu Y.J."/>
            <person name="Lin L.Y."/>
            <person name="Lin T.S."/>
            <person name="Lin C.L."/>
            <person name="Liu G.Y."/>
            <person name="Tzeng S.R."/>
            <person name="Hung H.C."/>
            <person name="Chan N.L."/>
        </authorList>
    </citation>
    <scope>X-RAY CRYSTALLOGRAPHY (2.63 ANGSTROMS) OF 2-421 IN COMPLEX WITH COFACTOR AND OAZ1</scope>
</reference>
<reference key="23">
    <citation type="journal article" date="2015" name="Sci. Rep.">
        <title>Structural basis of ornithine decarboxylase inactivation and accelerated degradation by polyamine sensor antizyme1.</title>
        <authorList>
            <person name="Wu D."/>
            <person name="Kaan H.Y."/>
            <person name="Zheng X."/>
            <person name="Tang X."/>
            <person name="He Y."/>
            <person name="Vanessa Tan Q."/>
            <person name="Zhang N."/>
            <person name="Song H."/>
        </authorList>
    </citation>
    <scope>X-RAY CRYSTALLOGRAPHY (3.20 ANGSTROMS) IN COMPLEX WITH COFACTOR; OAZ1 AND INHIBITOR</scope>
</reference>
<reference key="24">
    <citation type="journal article" date="2018" name="Am. J. Med. Genet. A">
        <title>Novel de novo pathogenic variant in the ODC1 gene in a girl with developmental delay, alopecia, and dysmorphic features.</title>
        <authorList>
            <person name="Bupp C.P."/>
            <person name="Schultz C.R."/>
            <person name="Uhl K.L."/>
            <person name="Rajasekaran S."/>
            <person name="Bachmann A.S."/>
        </authorList>
    </citation>
    <scope>VARIANT BABS 448-LYS--VAL-461 DEL</scope>
    <scope>INVOLVEMENT IN BABS</scope>
    <scope>CHARACTERIZATION OF VARIANT BABS 448-LYS--VAL-461 DEL</scope>
</reference>
<reference key="25">
    <citation type="journal article" date="2018" name="Am. J. Med. Genet. A">
        <title>Gain-of-function variants in the ODC1 gene cause a syndromic neurodevelopmental disorder associated with macrocephaly, alopecia, dysmorphic features, and neuroimaging abnormalities.</title>
        <authorList>
            <person name="Rodan L.H."/>
            <person name="Anyane-Yeboa K."/>
            <person name="Chong K."/>
            <person name="Klein Wassink-Ruiter J.S."/>
            <person name="Wilson A."/>
            <person name="Smith L."/>
            <person name="Kothare S.V."/>
            <person name="Rajabi F."/>
            <person name="Blaser S."/>
            <person name="Ni M."/>
            <person name="DeBerardinis R.J."/>
            <person name="Poduri A."/>
            <person name="Berry G.T."/>
        </authorList>
    </citation>
    <scope>VARIANT BABS 419-GLN--VAL-461 DEL</scope>
    <scope>INVOLVEMENT IN BABS</scope>
</reference>
<sequence length="461" mass="51148">MNNFGNEEFDCHFLDEGFTAKDILDQKINEVSSSDDKDAFYVADLGDILKKHLRWLKALPRVTPFYAVKCNDSKAIVKTLAATGTGFDCASKTEIQLVQSLGVPPERIIYANPCKQVSQIKYAANNGVQMMTFDSEVELMKVARAHPKAKLVLRIATDDSKAVCRLSVKFGATLRTSRLLLERAKELNIDVVGVSFHVGSGCTDPETFVQAISDARCVFDMGAEVGFSMYLLDIGGGFPGSEDVKLKFEEITGVINPALDKYFPSDSGVRIIAEPGRYYVASAFTLAVNIIAKKIVLKEQTGSDDEDESSEQTFMYYVNDGVYGSFNCILYDHAHVKPLLQKRPKPDEKYYSSSIWGPTCDGLDRIVERCDLPEMHVGDWMLFENMGAYTVAAASTFNGFQRPTIYYVMSGPAWQLMQQFQNPDFPPEVEEQDASTLPVSCAWESGMKRHRAACASASINV</sequence>
<gene>
    <name type="primary">ODC1</name>
</gene>